<organism>
    <name type="scientific">Chloroflexus aurantiacus (strain ATCC 29366 / DSM 635 / J-10-fl)</name>
    <dbReference type="NCBI Taxonomy" id="324602"/>
    <lineage>
        <taxon>Bacteria</taxon>
        <taxon>Bacillati</taxon>
        <taxon>Chloroflexota</taxon>
        <taxon>Chloroflexia</taxon>
        <taxon>Chloroflexales</taxon>
        <taxon>Chloroflexineae</taxon>
        <taxon>Chloroflexaceae</taxon>
        <taxon>Chloroflexus</taxon>
    </lineage>
</organism>
<evidence type="ECO:0000255" key="1">
    <source>
        <dbReference type="HAMAP-Rule" id="MF_00028"/>
    </source>
</evidence>
<feature type="chain" id="PRO_0000332328" description="Cobyric acid synthase">
    <location>
        <begin position="1"/>
        <end position="489"/>
    </location>
</feature>
<feature type="domain" description="GATase cobBQ-type" evidence="1">
    <location>
        <begin position="251"/>
        <end position="444"/>
    </location>
</feature>
<feature type="active site" description="Nucleophile" evidence="1">
    <location>
        <position position="329"/>
    </location>
</feature>
<feature type="active site" evidence="1">
    <location>
        <position position="436"/>
    </location>
</feature>
<protein>
    <recommendedName>
        <fullName evidence="1">Cobyric acid synthase</fullName>
    </recommendedName>
</protein>
<comment type="function">
    <text evidence="1">Catalyzes amidations at positions B, D, E, and G on adenosylcobyrinic A,C-diamide. NH(2) groups are provided by glutamine, and one molecule of ATP is hydrogenolyzed for each amidation.</text>
</comment>
<comment type="pathway">
    <text evidence="1">Cofactor biosynthesis; adenosylcobalamin biosynthesis.</text>
</comment>
<comment type="similarity">
    <text evidence="1">Belongs to the CobB/CobQ family. CobQ subfamily.</text>
</comment>
<sequence length="489" mass="52814">MQAPVLMVVGTASSVGKSTLVTALCRLAYRRGLRVAPFKAQNMSNNAAVTADGKEIARSTAVQAAAAGIAPTVAMNPILIKPEGQRRSQIIVEGRPWQSLTATDFWQRKAQLWSVVTRNLDHLRATYDLVIAEGAGSPVELNLKPGDIVNMRVARYAQAQTILVGDIDRGGIFAQLLGTLMLLEPEERQLITGCIVNRFRGDPSLFADGVTILEERSGLPVLGVIPWLDDLGLPEEDAVALEQPPVAPAHGLIIAVIRLPTIANFDDFDPLAREPGVVVRYIDHPLELTGAAAVILPGVKHTLAARHWLHERGFDNALREFTGAIVGICGGYQLLGERISDPLAVEGSGGEAAGLGLLPIETIFTTAKQTTQTIACAQVPWAGNEPLQGYEIHMGQSYRRGEAPAFLRIIQRGNTPTSADDGCISSDGRVWGCYLHGIFANDTFRRGWLRRLGWQPPTTPVARADPFDRLADHVAAALGPAVLDRLMRR</sequence>
<name>COBQ_CHLAA</name>
<keyword id="KW-0169">Cobalamin biosynthesis</keyword>
<keyword id="KW-0315">Glutamine amidotransferase</keyword>
<keyword id="KW-1185">Reference proteome</keyword>
<proteinExistence type="inferred from homology"/>
<dbReference type="EMBL" id="CP000909">
    <property type="protein sequence ID" value="ABY35766.1"/>
    <property type="molecule type" value="Genomic_DNA"/>
</dbReference>
<dbReference type="RefSeq" id="WP_012258419.1">
    <property type="nucleotide sequence ID" value="NC_010175.1"/>
</dbReference>
<dbReference type="RefSeq" id="YP_001636155.1">
    <property type="nucleotide sequence ID" value="NC_010175.1"/>
</dbReference>
<dbReference type="SMR" id="A9WIN9"/>
<dbReference type="STRING" id="324602.Caur_2560"/>
<dbReference type="EnsemblBacteria" id="ABY35766">
    <property type="protein sequence ID" value="ABY35766"/>
    <property type="gene ID" value="Caur_2560"/>
</dbReference>
<dbReference type="KEGG" id="cau:Caur_2560"/>
<dbReference type="PATRIC" id="fig|324602.8.peg.2886"/>
<dbReference type="eggNOG" id="COG1492">
    <property type="taxonomic scope" value="Bacteria"/>
</dbReference>
<dbReference type="HOGENOM" id="CLU_019250_2_2_0"/>
<dbReference type="InParanoid" id="A9WIN9"/>
<dbReference type="UniPathway" id="UPA00148"/>
<dbReference type="Proteomes" id="UP000002008">
    <property type="component" value="Chromosome"/>
</dbReference>
<dbReference type="GO" id="GO:0015420">
    <property type="term" value="F:ABC-type vitamin B12 transporter activity"/>
    <property type="evidence" value="ECO:0007669"/>
    <property type="project" value="UniProtKB-UniRule"/>
</dbReference>
<dbReference type="GO" id="GO:0003824">
    <property type="term" value="F:catalytic activity"/>
    <property type="evidence" value="ECO:0007669"/>
    <property type="project" value="InterPro"/>
</dbReference>
<dbReference type="GO" id="GO:0009236">
    <property type="term" value="P:cobalamin biosynthetic process"/>
    <property type="evidence" value="ECO:0007669"/>
    <property type="project" value="UniProtKB-UniRule"/>
</dbReference>
<dbReference type="CDD" id="cd05389">
    <property type="entry name" value="CobQ_N"/>
    <property type="match status" value="1"/>
</dbReference>
<dbReference type="CDD" id="cd01750">
    <property type="entry name" value="GATase1_CobQ"/>
    <property type="match status" value="1"/>
</dbReference>
<dbReference type="Gene3D" id="3.40.50.880">
    <property type="match status" value="1"/>
</dbReference>
<dbReference type="Gene3D" id="3.40.50.300">
    <property type="entry name" value="P-loop containing nucleotide triphosphate hydrolases"/>
    <property type="match status" value="1"/>
</dbReference>
<dbReference type="HAMAP" id="MF_00028">
    <property type="entry name" value="CobQ"/>
    <property type="match status" value="1"/>
</dbReference>
<dbReference type="InterPro" id="IPR029062">
    <property type="entry name" value="Class_I_gatase-like"/>
</dbReference>
<dbReference type="InterPro" id="IPR002586">
    <property type="entry name" value="CobQ/CobB/MinD/ParA_Nub-bd_dom"/>
</dbReference>
<dbReference type="InterPro" id="IPR033949">
    <property type="entry name" value="CobQ_GATase1"/>
</dbReference>
<dbReference type="InterPro" id="IPR047045">
    <property type="entry name" value="CobQ_N"/>
</dbReference>
<dbReference type="InterPro" id="IPR004459">
    <property type="entry name" value="CobQ_synth"/>
</dbReference>
<dbReference type="InterPro" id="IPR011698">
    <property type="entry name" value="GATase_3"/>
</dbReference>
<dbReference type="InterPro" id="IPR027417">
    <property type="entry name" value="P-loop_NTPase"/>
</dbReference>
<dbReference type="NCBIfam" id="TIGR00313">
    <property type="entry name" value="cobQ"/>
    <property type="match status" value="1"/>
</dbReference>
<dbReference type="NCBIfam" id="NF001989">
    <property type="entry name" value="PRK00784.1"/>
    <property type="match status" value="1"/>
</dbReference>
<dbReference type="PANTHER" id="PTHR21343:SF1">
    <property type="entry name" value="COBYRIC ACID SYNTHASE"/>
    <property type="match status" value="1"/>
</dbReference>
<dbReference type="PANTHER" id="PTHR21343">
    <property type="entry name" value="DETHIOBIOTIN SYNTHETASE"/>
    <property type="match status" value="1"/>
</dbReference>
<dbReference type="Pfam" id="PF01656">
    <property type="entry name" value="CbiA"/>
    <property type="match status" value="1"/>
</dbReference>
<dbReference type="Pfam" id="PF07685">
    <property type="entry name" value="GATase_3"/>
    <property type="match status" value="1"/>
</dbReference>
<dbReference type="SUPFAM" id="SSF52317">
    <property type="entry name" value="Class I glutamine amidotransferase-like"/>
    <property type="match status" value="1"/>
</dbReference>
<dbReference type="SUPFAM" id="SSF52540">
    <property type="entry name" value="P-loop containing nucleoside triphosphate hydrolases"/>
    <property type="match status" value="1"/>
</dbReference>
<dbReference type="PROSITE" id="PS51274">
    <property type="entry name" value="GATASE_COBBQ"/>
    <property type="match status" value="1"/>
</dbReference>
<gene>
    <name evidence="1" type="primary">cobQ</name>
    <name type="ordered locus">Caur_2560</name>
</gene>
<accession>A9WIN9</accession>
<reference key="1">
    <citation type="journal article" date="2011" name="BMC Genomics">
        <title>Complete genome sequence of the filamentous anoxygenic phototrophic bacterium Chloroflexus aurantiacus.</title>
        <authorList>
            <person name="Tang K.H."/>
            <person name="Barry K."/>
            <person name="Chertkov O."/>
            <person name="Dalin E."/>
            <person name="Han C.S."/>
            <person name="Hauser L.J."/>
            <person name="Honchak B.M."/>
            <person name="Karbach L.E."/>
            <person name="Land M.L."/>
            <person name="Lapidus A."/>
            <person name="Larimer F.W."/>
            <person name="Mikhailova N."/>
            <person name="Pitluck S."/>
            <person name="Pierson B.K."/>
            <person name="Blankenship R.E."/>
        </authorList>
    </citation>
    <scope>NUCLEOTIDE SEQUENCE [LARGE SCALE GENOMIC DNA]</scope>
    <source>
        <strain>ATCC 29366 / DSM 635 / J-10-fl</strain>
    </source>
</reference>